<sequence>MESPGPGGPPLVQAPYTVLLLPLGTSRQDPGAQNFFLWLQMMQALEREQDALWQGLELLEHGQAWFADRLRETQQRQLQLGALGEDFLMDLHSETDAPLLTRIQKVNACLHSLIHKELSKHRKGVTQSTGEVVSQAPPGPKGPTLV</sequence>
<organism>
    <name type="scientific">Mus musculus</name>
    <name type="common">Mouse</name>
    <dbReference type="NCBI Taxonomy" id="10090"/>
    <lineage>
        <taxon>Eukaryota</taxon>
        <taxon>Metazoa</taxon>
        <taxon>Chordata</taxon>
        <taxon>Craniata</taxon>
        <taxon>Vertebrata</taxon>
        <taxon>Euteleostomi</taxon>
        <taxon>Mammalia</taxon>
        <taxon>Eutheria</taxon>
        <taxon>Euarchontoglires</taxon>
        <taxon>Glires</taxon>
        <taxon>Rodentia</taxon>
        <taxon>Myomorpha</taxon>
        <taxon>Muroidea</taxon>
        <taxon>Muridae</taxon>
        <taxon>Murinae</taxon>
        <taxon>Mus</taxon>
        <taxon>Mus</taxon>
    </lineage>
</organism>
<feature type="chain" id="PRO_0000244083" description="Suppressor APC domain-containing protein 1">
    <location>
        <begin position="1"/>
        <end position="146"/>
    </location>
</feature>
<feature type="region of interest" description="Disordered" evidence="1">
    <location>
        <begin position="121"/>
        <end position="146"/>
    </location>
</feature>
<feature type="compositionally biased region" description="Pro residues" evidence="1">
    <location>
        <begin position="137"/>
        <end position="146"/>
    </location>
</feature>
<feature type="sequence conflict" description="In Ref. 3; BAB31642." evidence="2" ref="3">
    <original>E</original>
    <variation>Q</variation>
    <location>
        <position position="94"/>
    </location>
</feature>
<gene>
    <name type="primary">Sapcd1</name>
    <name type="synonym">G7d</name>
    <name type="synonym">Ng23</name>
</gene>
<dbReference type="EMBL" id="AF397035">
    <property type="protein sequence ID" value="AAL14455.1"/>
    <property type="molecule type" value="Genomic_DNA"/>
</dbReference>
<dbReference type="EMBL" id="AF397036">
    <property type="protein sequence ID" value="AAL14463.1"/>
    <property type="molecule type" value="Genomic_DNA"/>
</dbReference>
<dbReference type="EMBL" id="AF109905">
    <property type="protein sequence ID" value="AAC84153.1"/>
    <property type="molecule type" value="Genomic_DNA"/>
</dbReference>
<dbReference type="EMBL" id="AK019275">
    <property type="protein sequence ID" value="BAB31642.1"/>
    <property type="molecule type" value="mRNA"/>
</dbReference>
<dbReference type="EMBL" id="BC147772">
    <property type="protein sequence ID" value="AAI47773.1"/>
    <property type="molecule type" value="mRNA"/>
</dbReference>
<dbReference type="EMBL" id="BC147780">
    <property type="protein sequence ID" value="AAI47781.1"/>
    <property type="molecule type" value="mRNA"/>
</dbReference>
<dbReference type="CCDS" id="CCDS37594.1"/>
<dbReference type="RefSeq" id="NP_076382.3">
    <property type="nucleotide sequence ID" value="NM_023893.4"/>
</dbReference>
<dbReference type="RefSeq" id="XP_030106005.1">
    <property type="nucleotide sequence ID" value="XM_030250145.2"/>
</dbReference>
<dbReference type="SMR" id="Q9CY86"/>
<dbReference type="STRING" id="10090.ENSMUSP00000047448"/>
<dbReference type="PhosphoSitePlus" id="Q9CY86"/>
<dbReference type="PaxDb" id="10090-ENSMUSP00000047448"/>
<dbReference type="Antibodypedia" id="70925">
    <property type="antibodies" value="19 antibodies from 8 providers"/>
</dbReference>
<dbReference type="Ensembl" id="ENSMUST00000040151.9">
    <property type="protein sequence ID" value="ENSMUSP00000047448.3"/>
    <property type="gene ID" value="ENSMUSG00000036185.10"/>
</dbReference>
<dbReference type="GeneID" id="78376"/>
<dbReference type="KEGG" id="mmu:78376"/>
<dbReference type="UCSC" id="uc008cfb.3">
    <property type="organism name" value="mouse"/>
</dbReference>
<dbReference type="AGR" id="MGI:2388100"/>
<dbReference type="CTD" id="401251"/>
<dbReference type="MGI" id="MGI:2388100">
    <property type="gene designation" value="Sapcd1"/>
</dbReference>
<dbReference type="VEuPathDB" id="HostDB:ENSMUSG00000036185"/>
<dbReference type="eggNOG" id="ENOG502SES6">
    <property type="taxonomic scope" value="Eukaryota"/>
</dbReference>
<dbReference type="GeneTree" id="ENSGT00500000045192"/>
<dbReference type="HOGENOM" id="CLU_129376_0_0_1"/>
<dbReference type="InParanoid" id="Q9CY86"/>
<dbReference type="OMA" id="RQDALWQ"/>
<dbReference type="OrthoDB" id="10035013at2759"/>
<dbReference type="PhylomeDB" id="Q9CY86"/>
<dbReference type="TreeFam" id="TF324086"/>
<dbReference type="BioGRID-ORCS" id="78376">
    <property type="hits" value="6 hits in 78 CRISPR screens"/>
</dbReference>
<dbReference type="PRO" id="PR:Q9CY86"/>
<dbReference type="Proteomes" id="UP000000589">
    <property type="component" value="Chromosome 17"/>
</dbReference>
<dbReference type="RNAct" id="Q9CY86">
    <property type="molecule type" value="protein"/>
</dbReference>
<dbReference type="Bgee" id="ENSMUSG00000036185">
    <property type="expression patterns" value="Expressed in epithelium of lens and 92 other cell types or tissues"/>
</dbReference>
<dbReference type="ExpressionAtlas" id="Q9CY86">
    <property type="expression patterns" value="baseline and differential"/>
</dbReference>
<dbReference type="InterPro" id="IPR026828">
    <property type="entry name" value="Suppressor_APCD_1/2"/>
</dbReference>
<dbReference type="PANTHER" id="PTHR14907">
    <property type="entry name" value="FI14130P"/>
    <property type="match status" value="1"/>
</dbReference>
<dbReference type="PANTHER" id="PTHR14907:SF4">
    <property type="entry name" value="SUPPRESSOR APC DOMAIN-CONTAINING PROTEIN 1"/>
    <property type="match status" value="1"/>
</dbReference>
<dbReference type="Pfam" id="PF11414">
    <property type="entry name" value="Suppressor_APC"/>
    <property type="match status" value="1"/>
</dbReference>
<reference key="1">
    <citation type="journal article" date="2001" name="Immunogenetics">
        <title>Genotype versus phenotype: conflicting results in mapping a lung tumor susceptibility locus to the G7c recombination interval in the mouse MHC class III region.</title>
        <authorList>
            <person name="van Kooij M."/>
            <person name="de Groot K."/>
            <person name="van Vugt H."/>
            <person name="Aten J."/>
            <person name="Snoek M."/>
        </authorList>
    </citation>
    <scope>NUCLEOTIDE SEQUENCE [GENOMIC DNA]</scope>
    <source>
        <strain>C57BL/10</strain>
    </source>
</reference>
<reference key="2">
    <citation type="journal article" date="2003" name="Genome Res.">
        <title>Analysis of the gene-dense major histocompatibility complex class III region and its comparison to mouse.</title>
        <authorList>
            <person name="Xie T."/>
            <person name="Rowen L."/>
            <person name="Aguado B."/>
            <person name="Ahearn M.E."/>
            <person name="Madan A."/>
            <person name="Qin S."/>
            <person name="Campbell R.D."/>
            <person name="Hood L."/>
        </authorList>
    </citation>
    <scope>NUCLEOTIDE SEQUENCE [LARGE SCALE GENOMIC DNA]</scope>
    <source>
        <strain>129</strain>
    </source>
</reference>
<reference key="3">
    <citation type="journal article" date="2005" name="Science">
        <title>The transcriptional landscape of the mammalian genome.</title>
        <authorList>
            <person name="Carninci P."/>
            <person name="Kasukawa T."/>
            <person name="Katayama S."/>
            <person name="Gough J."/>
            <person name="Frith M.C."/>
            <person name="Maeda N."/>
            <person name="Oyama R."/>
            <person name="Ravasi T."/>
            <person name="Lenhard B."/>
            <person name="Wells C."/>
            <person name="Kodzius R."/>
            <person name="Shimokawa K."/>
            <person name="Bajic V.B."/>
            <person name="Brenner S.E."/>
            <person name="Batalov S."/>
            <person name="Forrest A.R."/>
            <person name="Zavolan M."/>
            <person name="Davis M.J."/>
            <person name="Wilming L.G."/>
            <person name="Aidinis V."/>
            <person name="Allen J.E."/>
            <person name="Ambesi-Impiombato A."/>
            <person name="Apweiler R."/>
            <person name="Aturaliya R.N."/>
            <person name="Bailey T.L."/>
            <person name="Bansal M."/>
            <person name="Baxter L."/>
            <person name="Beisel K.W."/>
            <person name="Bersano T."/>
            <person name="Bono H."/>
            <person name="Chalk A.M."/>
            <person name="Chiu K.P."/>
            <person name="Choudhary V."/>
            <person name="Christoffels A."/>
            <person name="Clutterbuck D.R."/>
            <person name="Crowe M.L."/>
            <person name="Dalla E."/>
            <person name="Dalrymple B.P."/>
            <person name="de Bono B."/>
            <person name="Della Gatta G."/>
            <person name="di Bernardo D."/>
            <person name="Down T."/>
            <person name="Engstrom P."/>
            <person name="Fagiolini M."/>
            <person name="Faulkner G."/>
            <person name="Fletcher C.F."/>
            <person name="Fukushima T."/>
            <person name="Furuno M."/>
            <person name="Futaki S."/>
            <person name="Gariboldi M."/>
            <person name="Georgii-Hemming P."/>
            <person name="Gingeras T.R."/>
            <person name="Gojobori T."/>
            <person name="Green R.E."/>
            <person name="Gustincich S."/>
            <person name="Harbers M."/>
            <person name="Hayashi Y."/>
            <person name="Hensch T.K."/>
            <person name="Hirokawa N."/>
            <person name="Hill D."/>
            <person name="Huminiecki L."/>
            <person name="Iacono M."/>
            <person name="Ikeo K."/>
            <person name="Iwama A."/>
            <person name="Ishikawa T."/>
            <person name="Jakt M."/>
            <person name="Kanapin A."/>
            <person name="Katoh M."/>
            <person name="Kawasawa Y."/>
            <person name="Kelso J."/>
            <person name="Kitamura H."/>
            <person name="Kitano H."/>
            <person name="Kollias G."/>
            <person name="Krishnan S.P."/>
            <person name="Kruger A."/>
            <person name="Kummerfeld S.K."/>
            <person name="Kurochkin I.V."/>
            <person name="Lareau L.F."/>
            <person name="Lazarevic D."/>
            <person name="Lipovich L."/>
            <person name="Liu J."/>
            <person name="Liuni S."/>
            <person name="McWilliam S."/>
            <person name="Madan Babu M."/>
            <person name="Madera M."/>
            <person name="Marchionni L."/>
            <person name="Matsuda H."/>
            <person name="Matsuzawa S."/>
            <person name="Miki H."/>
            <person name="Mignone F."/>
            <person name="Miyake S."/>
            <person name="Morris K."/>
            <person name="Mottagui-Tabar S."/>
            <person name="Mulder N."/>
            <person name="Nakano N."/>
            <person name="Nakauchi H."/>
            <person name="Ng P."/>
            <person name="Nilsson R."/>
            <person name="Nishiguchi S."/>
            <person name="Nishikawa S."/>
            <person name="Nori F."/>
            <person name="Ohara O."/>
            <person name="Okazaki Y."/>
            <person name="Orlando V."/>
            <person name="Pang K.C."/>
            <person name="Pavan W.J."/>
            <person name="Pavesi G."/>
            <person name="Pesole G."/>
            <person name="Petrovsky N."/>
            <person name="Piazza S."/>
            <person name="Reed J."/>
            <person name="Reid J.F."/>
            <person name="Ring B.Z."/>
            <person name="Ringwald M."/>
            <person name="Rost B."/>
            <person name="Ruan Y."/>
            <person name="Salzberg S.L."/>
            <person name="Sandelin A."/>
            <person name="Schneider C."/>
            <person name="Schoenbach C."/>
            <person name="Sekiguchi K."/>
            <person name="Semple C.A."/>
            <person name="Seno S."/>
            <person name="Sessa L."/>
            <person name="Sheng Y."/>
            <person name="Shibata Y."/>
            <person name="Shimada H."/>
            <person name="Shimada K."/>
            <person name="Silva D."/>
            <person name="Sinclair B."/>
            <person name="Sperling S."/>
            <person name="Stupka E."/>
            <person name="Sugiura K."/>
            <person name="Sultana R."/>
            <person name="Takenaka Y."/>
            <person name="Taki K."/>
            <person name="Tammoja K."/>
            <person name="Tan S.L."/>
            <person name="Tang S."/>
            <person name="Taylor M.S."/>
            <person name="Tegner J."/>
            <person name="Teichmann S.A."/>
            <person name="Ueda H.R."/>
            <person name="van Nimwegen E."/>
            <person name="Verardo R."/>
            <person name="Wei C.L."/>
            <person name="Yagi K."/>
            <person name="Yamanishi H."/>
            <person name="Zabarovsky E."/>
            <person name="Zhu S."/>
            <person name="Zimmer A."/>
            <person name="Hide W."/>
            <person name="Bult C."/>
            <person name="Grimmond S.M."/>
            <person name="Teasdale R.D."/>
            <person name="Liu E.T."/>
            <person name="Brusic V."/>
            <person name="Quackenbush J."/>
            <person name="Wahlestedt C."/>
            <person name="Mattick J.S."/>
            <person name="Hume D.A."/>
            <person name="Kai C."/>
            <person name="Sasaki D."/>
            <person name="Tomaru Y."/>
            <person name="Fukuda S."/>
            <person name="Kanamori-Katayama M."/>
            <person name="Suzuki M."/>
            <person name="Aoki J."/>
            <person name="Arakawa T."/>
            <person name="Iida J."/>
            <person name="Imamura K."/>
            <person name="Itoh M."/>
            <person name="Kato T."/>
            <person name="Kawaji H."/>
            <person name="Kawagashira N."/>
            <person name="Kawashima T."/>
            <person name="Kojima M."/>
            <person name="Kondo S."/>
            <person name="Konno H."/>
            <person name="Nakano K."/>
            <person name="Ninomiya N."/>
            <person name="Nishio T."/>
            <person name="Okada M."/>
            <person name="Plessy C."/>
            <person name="Shibata K."/>
            <person name="Shiraki T."/>
            <person name="Suzuki S."/>
            <person name="Tagami M."/>
            <person name="Waki K."/>
            <person name="Watahiki A."/>
            <person name="Okamura-Oho Y."/>
            <person name="Suzuki H."/>
            <person name="Kawai J."/>
            <person name="Hayashizaki Y."/>
        </authorList>
    </citation>
    <scope>NUCLEOTIDE SEQUENCE [LARGE SCALE MRNA]</scope>
    <source>
        <strain>C57BL/6J</strain>
    </source>
</reference>
<reference key="4">
    <citation type="journal article" date="2004" name="Genome Res.">
        <title>The status, quality, and expansion of the NIH full-length cDNA project: the Mammalian Gene Collection (MGC).</title>
        <authorList>
            <consortium name="The MGC Project Team"/>
        </authorList>
    </citation>
    <scope>NUCLEOTIDE SEQUENCE [LARGE SCALE MRNA]</scope>
    <source>
        <tissue>Brain</tissue>
    </source>
</reference>
<protein>
    <recommendedName>
        <fullName>Suppressor APC domain-containing protein 1</fullName>
    </recommendedName>
    <alternativeName>
        <fullName>Protein G7d</fullName>
    </alternativeName>
</protein>
<evidence type="ECO:0000256" key="1">
    <source>
        <dbReference type="SAM" id="MobiDB-lite"/>
    </source>
</evidence>
<evidence type="ECO:0000305" key="2"/>
<proteinExistence type="evidence at transcript level"/>
<keyword id="KW-1185">Reference proteome</keyword>
<name>SAPC1_MOUSE</name>
<accession>Q9CY86</accession>
<accession>B2RWH1</accession>
<accession>Q9Z1Q7</accession>